<gene>
    <name evidence="1" type="primary">pyrB</name>
    <name type="ordered locus">HQ_1879A</name>
</gene>
<evidence type="ECO:0000255" key="1">
    <source>
        <dbReference type="HAMAP-Rule" id="MF_00001"/>
    </source>
</evidence>
<feature type="chain" id="PRO_0000301645" description="Aspartate carbamoyltransferase catalytic subunit">
    <location>
        <begin position="1"/>
        <end position="304"/>
    </location>
</feature>
<feature type="binding site" evidence="1">
    <location>
        <position position="53"/>
    </location>
    <ligand>
        <name>carbamoyl phosphate</name>
        <dbReference type="ChEBI" id="CHEBI:58228"/>
    </ligand>
</feature>
<feature type="binding site" evidence="1">
    <location>
        <position position="54"/>
    </location>
    <ligand>
        <name>carbamoyl phosphate</name>
        <dbReference type="ChEBI" id="CHEBI:58228"/>
    </ligand>
</feature>
<feature type="binding site" evidence="1">
    <location>
        <position position="82"/>
    </location>
    <ligand>
        <name>L-aspartate</name>
        <dbReference type="ChEBI" id="CHEBI:29991"/>
    </ligand>
</feature>
<feature type="binding site" evidence="1">
    <location>
        <position position="103"/>
    </location>
    <ligand>
        <name>carbamoyl phosphate</name>
        <dbReference type="ChEBI" id="CHEBI:58228"/>
    </ligand>
</feature>
<feature type="binding site" evidence="1">
    <location>
        <position position="131"/>
    </location>
    <ligand>
        <name>carbamoyl phosphate</name>
        <dbReference type="ChEBI" id="CHEBI:58228"/>
    </ligand>
</feature>
<feature type="binding site" evidence="1">
    <location>
        <position position="134"/>
    </location>
    <ligand>
        <name>carbamoyl phosphate</name>
        <dbReference type="ChEBI" id="CHEBI:58228"/>
    </ligand>
</feature>
<feature type="binding site" evidence="1">
    <location>
        <position position="163"/>
    </location>
    <ligand>
        <name>L-aspartate</name>
        <dbReference type="ChEBI" id="CHEBI:29991"/>
    </ligand>
</feature>
<feature type="binding site" evidence="1">
    <location>
        <position position="224"/>
    </location>
    <ligand>
        <name>L-aspartate</name>
        <dbReference type="ChEBI" id="CHEBI:29991"/>
    </ligand>
</feature>
<feature type="binding site" evidence="1">
    <location>
        <position position="263"/>
    </location>
    <ligand>
        <name>carbamoyl phosphate</name>
        <dbReference type="ChEBI" id="CHEBI:58228"/>
    </ligand>
</feature>
<feature type="binding site" evidence="1">
    <location>
        <position position="264"/>
    </location>
    <ligand>
        <name>carbamoyl phosphate</name>
        <dbReference type="ChEBI" id="CHEBI:58228"/>
    </ligand>
</feature>
<organism>
    <name type="scientific">Haloquadratum walsbyi (strain DSM 16790 / HBSQ001)</name>
    <dbReference type="NCBI Taxonomy" id="362976"/>
    <lineage>
        <taxon>Archaea</taxon>
        <taxon>Methanobacteriati</taxon>
        <taxon>Methanobacteriota</taxon>
        <taxon>Stenosarchaea group</taxon>
        <taxon>Halobacteria</taxon>
        <taxon>Halobacteriales</taxon>
        <taxon>Haloferacaceae</taxon>
        <taxon>Haloquadratum</taxon>
    </lineage>
</organism>
<sequence length="304" mass="33676">MHQDHLLSTTQLSREDIETILDRAAAIEMNPDGWEAQYSGTVLGLCFFEPSTRTRMSFDAAMKRLGGRTIDMGSVDNSSISKGETLADTVRVIAGYADAIVLRHPSEGAAKLAAEFVDIPVINAGDGAGQHPTQTLLDLYTMRENVGLDEITVGIAGDLKYGRTVHSLAAALSNFDVRQHFISPESLQLPRNIRYDLHDSGSQVREHTDIESILPELDVLYVTRIQRERFPDENEYQRVAGQYRVDTDILSHADNNLTVMHPLPRVDEIAPEVDTTEHAAYFEQAHNGVPVRMALLDALIGRAK</sequence>
<comment type="function">
    <text evidence="1">Catalyzes the condensation of carbamoyl phosphate and aspartate to form carbamoyl aspartate and inorganic phosphate, the committed step in the de novo pyrimidine nucleotide biosynthesis pathway.</text>
</comment>
<comment type="catalytic activity">
    <reaction evidence="1">
        <text>carbamoyl phosphate + L-aspartate = N-carbamoyl-L-aspartate + phosphate + H(+)</text>
        <dbReference type="Rhea" id="RHEA:20013"/>
        <dbReference type="ChEBI" id="CHEBI:15378"/>
        <dbReference type="ChEBI" id="CHEBI:29991"/>
        <dbReference type="ChEBI" id="CHEBI:32814"/>
        <dbReference type="ChEBI" id="CHEBI:43474"/>
        <dbReference type="ChEBI" id="CHEBI:58228"/>
        <dbReference type="EC" id="2.1.3.2"/>
    </reaction>
</comment>
<comment type="pathway">
    <text evidence="1">Pyrimidine metabolism; UMP biosynthesis via de novo pathway; (S)-dihydroorotate from bicarbonate: step 2/3.</text>
</comment>
<comment type="subunit">
    <text evidence="1">Heterooligomer of catalytic and regulatory chains.</text>
</comment>
<comment type="similarity">
    <text evidence="1">Belongs to the aspartate/ornithine carbamoyltransferase superfamily. ATCase family.</text>
</comment>
<name>PYRB_HALWD</name>
<protein>
    <recommendedName>
        <fullName evidence="1">Aspartate carbamoyltransferase catalytic subunit</fullName>
        <ecNumber evidence="1">2.1.3.2</ecNumber>
    </recommendedName>
    <alternativeName>
        <fullName evidence="1">Aspartate transcarbamylase</fullName>
        <shortName evidence="1">ATCase</shortName>
    </alternativeName>
</protein>
<reference key="1">
    <citation type="journal article" date="2006" name="BMC Genomics">
        <title>The genome of the square archaeon Haloquadratum walsbyi: life at the limits of water activity.</title>
        <authorList>
            <person name="Bolhuis H."/>
            <person name="Palm P."/>
            <person name="Wende A."/>
            <person name="Falb M."/>
            <person name="Rampp M."/>
            <person name="Rodriguez-Valera F."/>
            <person name="Pfeiffer F."/>
            <person name="Oesterhelt D."/>
        </authorList>
    </citation>
    <scope>NUCLEOTIDE SEQUENCE [LARGE SCALE GENOMIC DNA]</scope>
    <source>
        <strain>DSM 16790 / HBSQ001</strain>
    </source>
</reference>
<accession>Q18J05</accession>
<dbReference type="EC" id="2.1.3.2" evidence="1"/>
<dbReference type="EMBL" id="AM180088">
    <property type="protein sequence ID" value="CAJ52007.1"/>
    <property type="molecule type" value="Genomic_DNA"/>
</dbReference>
<dbReference type="RefSeq" id="WP_011571154.1">
    <property type="nucleotide sequence ID" value="NC_008212.1"/>
</dbReference>
<dbReference type="SMR" id="Q18J05"/>
<dbReference type="STRING" id="362976.HQ_1879A"/>
<dbReference type="GeneID" id="4194545"/>
<dbReference type="KEGG" id="hwa:HQ_1879A"/>
<dbReference type="eggNOG" id="arCOG00911">
    <property type="taxonomic scope" value="Archaea"/>
</dbReference>
<dbReference type="HOGENOM" id="CLU_043846_1_2_2"/>
<dbReference type="UniPathway" id="UPA00070">
    <property type="reaction ID" value="UER00116"/>
</dbReference>
<dbReference type="Proteomes" id="UP000001975">
    <property type="component" value="Chromosome"/>
</dbReference>
<dbReference type="GO" id="GO:0016597">
    <property type="term" value="F:amino acid binding"/>
    <property type="evidence" value="ECO:0007669"/>
    <property type="project" value="InterPro"/>
</dbReference>
<dbReference type="GO" id="GO:0004070">
    <property type="term" value="F:aspartate carbamoyltransferase activity"/>
    <property type="evidence" value="ECO:0007669"/>
    <property type="project" value="UniProtKB-UniRule"/>
</dbReference>
<dbReference type="GO" id="GO:0006207">
    <property type="term" value="P:'de novo' pyrimidine nucleobase biosynthetic process"/>
    <property type="evidence" value="ECO:0007669"/>
    <property type="project" value="InterPro"/>
</dbReference>
<dbReference type="GO" id="GO:0044205">
    <property type="term" value="P:'de novo' UMP biosynthetic process"/>
    <property type="evidence" value="ECO:0007669"/>
    <property type="project" value="UniProtKB-UniRule"/>
</dbReference>
<dbReference type="GO" id="GO:0006520">
    <property type="term" value="P:amino acid metabolic process"/>
    <property type="evidence" value="ECO:0007669"/>
    <property type="project" value="InterPro"/>
</dbReference>
<dbReference type="FunFam" id="3.40.50.1370:FF:000001">
    <property type="entry name" value="Aspartate carbamoyltransferase"/>
    <property type="match status" value="1"/>
</dbReference>
<dbReference type="FunFam" id="3.40.50.1370:FF:000002">
    <property type="entry name" value="Aspartate carbamoyltransferase 2"/>
    <property type="match status" value="1"/>
</dbReference>
<dbReference type="Gene3D" id="3.40.50.1370">
    <property type="entry name" value="Aspartate/ornithine carbamoyltransferase"/>
    <property type="match status" value="2"/>
</dbReference>
<dbReference type="HAMAP" id="MF_00001">
    <property type="entry name" value="Asp_carb_tr"/>
    <property type="match status" value="1"/>
</dbReference>
<dbReference type="InterPro" id="IPR006132">
    <property type="entry name" value="Asp/Orn_carbamoyltranf_P-bd"/>
</dbReference>
<dbReference type="InterPro" id="IPR006130">
    <property type="entry name" value="Asp/Orn_carbamoylTrfase"/>
</dbReference>
<dbReference type="InterPro" id="IPR036901">
    <property type="entry name" value="Asp/Orn_carbamoylTrfase_sf"/>
</dbReference>
<dbReference type="InterPro" id="IPR002082">
    <property type="entry name" value="Asp_carbamoyltransf"/>
</dbReference>
<dbReference type="InterPro" id="IPR006131">
    <property type="entry name" value="Asp_carbamoyltransf_Asp/Orn-bd"/>
</dbReference>
<dbReference type="NCBIfam" id="TIGR00670">
    <property type="entry name" value="asp_carb_tr"/>
    <property type="match status" value="1"/>
</dbReference>
<dbReference type="NCBIfam" id="NF002032">
    <property type="entry name" value="PRK00856.1"/>
    <property type="match status" value="1"/>
</dbReference>
<dbReference type="PANTHER" id="PTHR45753:SF6">
    <property type="entry name" value="ASPARTATE CARBAMOYLTRANSFERASE"/>
    <property type="match status" value="1"/>
</dbReference>
<dbReference type="PANTHER" id="PTHR45753">
    <property type="entry name" value="ORNITHINE CARBAMOYLTRANSFERASE, MITOCHONDRIAL"/>
    <property type="match status" value="1"/>
</dbReference>
<dbReference type="Pfam" id="PF00185">
    <property type="entry name" value="OTCace"/>
    <property type="match status" value="1"/>
</dbReference>
<dbReference type="Pfam" id="PF02729">
    <property type="entry name" value="OTCace_N"/>
    <property type="match status" value="1"/>
</dbReference>
<dbReference type="PRINTS" id="PR00100">
    <property type="entry name" value="AOTCASE"/>
</dbReference>
<dbReference type="PRINTS" id="PR00101">
    <property type="entry name" value="ATCASE"/>
</dbReference>
<dbReference type="SUPFAM" id="SSF53671">
    <property type="entry name" value="Aspartate/ornithine carbamoyltransferase"/>
    <property type="match status" value="1"/>
</dbReference>
<dbReference type="PROSITE" id="PS00097">
    <property type="entry name" value="CARBAMOYLTRANSFERASE"/>
    <property type="match status" value="1"/>
</dbReference>
<keyword id="KW-0665">Pyrimidine biosynthesis</keyword>
<keyword id="KW-1185">Reference proteome</keyword>
<keyword id="KW-0808">Transferase</keyword>
<proteinExistence type="inferred from homology"/>